<protein>
    <recommendedName>
        <fullName>Histone H2A.Z-specific chaperone chz1</fullName>
    </recommendedName>
</protein>
<organism>
    <name type="scientific">Aspergillus terreus (strain NIH 2624 / FGSC A1156)</name>
    <dbReference type="NCBI Taxonomy" id="341663"/>
    <lineage>
        <taxon>Eukaryota</taxon>
        <taxon>Fungi</taxon>
        <taxon>Dikarya</taxon>
        <taxon>Ascomycota</taxon>
        <taxon>Pezizomycotina</taxon>
        <taxon>Eurotiomycetes</taxon>
        <taxon>Eurotiomycetidae</taxon>
        <taxon>Eurotiales</taxon>
        <taxon>Aspergillaceae</taxon>
        <taxon>Aspergillus</taxon>
        <taxon>Aspergillus subgen. Circumdati</taxon>
    </lineage>
</organism>
<comment type="function">
    <text evidence="1">Forms a chaperone-bound H2A.Z-H2B complex that acts as a source for SWR1 complex-dependent H2A to H2A.Z histone replacement in chromatin.</text>
</comment>
<comment type="subunit">
    <text evidence="1">Forms a heterotrimer with H2A.Z-H2B, stabilizing the association of the histone dimer. Also, with a lower affinity, forms a heterotrimer with H2A-H2B (By similarity).</text>
</comment>
<comment type="subcellular location">
    <subcellularLocation>
        <location evidence="1">Nucleus</location>
    </subcellularLocation>
</comment>
<comment type="similarity">
    <text evidence="3">Belongs to the CHZ1 family.</text>
</comment>
<gene>
    <name type="primary">chz1</name>
    <name type="ORF">ATEG_10177</name>
</gene>
<dbReference type="EMBL" id="CH476609">
    <property type="protein sequence ID" value="EAU29626.1"/>
    <property type="molecule type" value="Genomic_DNA"/>
</dbReference>
<dbReference type="RefSeq" id="XP_001209479.1">
    <property type="nucleotide sequence ID" value="XM_001209479.1"/>
</dbReference>
<dbReference type="STRING" id="341663.Q0C807"/>
<dbReference type="EnsemblFungi" id="EAU29626">
    <property type="protein sequence ID" value="EAU29626"/>
    <property type="gene ID" value="ATEG_10177"/>
</dbReference>
<dbReference type="GeneID" id="4319659"/>
<dbReference type="VEuPathDB" id="FungiDB:ATEG_10177"/>
<dbReference type="eggNOG" id="ENOG502SCUM">
    <property type="taxonomic scope" value="Eukaryota"/>
</dbReference>
<dbReference type="HOGENOM" id="CLU_130004_1_1_1"/>
<dbReference type="OMA" id="MEGVQDP"/>
<dbReference type="Proteomes" id="UP000007963">
    <property type="component" value="Unassembled WGS sequence"/>
</dbReference>
<dbReference type="GO" id="GO:0005634">
    <property type="term" value="C:nucleus"/>
    <property type="evidence" value="ECO:0007669"/>
    <property type="project" value="UniProtKB-SubCell"/>
</dbReference>
<dbReference type="InterPro" id="IPR019098">
    <property type="entry name" value="Histone_chaperone_domain_CHZ"/>
</dbReference>
<dbReference type="Pfam" id="PF09649">
    <property type="entry name" value="CHZ"/>
    <property type="match status" value="1"/>
</dbReference>
<dbReference type="SMART" id="SM01082">
    <property type="entry name" value="CHZ"/>
    <property type="match status" value="1"/>
</dbReference>
<name>CHZ1_ASPTN</name>
<evidence type="ECO:0000250" key="1"/>
<evidence type="ECO:0000256" key="2">
    <source>
        <dbReference type="SAM" id="MobiDB-lite"/>
    </source>
</evidence>
<evidence type="ECO:0000305" key="3"/>
<feature type="chain" id="PRO_0000330203" description="Histone H2A.Z-specific chaperone chz1">
    <location>
        <begin position="1"/>
        <end position="111"/>
    </location>
</feature>
<feature type="region of interest" description="Disordered" evidence="2">
    <location>
        <begin position="1"/>
        <end position="111"/>
    </location>
</feature>
<feature type="compositionally biased region" description="Low complexity" evidence="2">
    <location>
        <begin position="12"/>
        <end position="21"/>
    </location>
</feature>
<feature type="compositionally biased region" description="Basic and acidic residues" evidence="2">
    <location>
        <begin position="22"/>
        <end position="32"/>
    </location>
</feature>
<feature type="compositionally biased region" description="Acidic residues" evidence="2">
    <location>
        <begin position="39"/>
        <end position="56"/>
    </location>
</feature>
<feature type="compositionally biased region" description="Basic and acidic residues" evidence="2">
    <location>
        <begin position="76"/>
        <end position="89"/>
    </location>
</feature>
<feature type="compositionally biased region" description="Acidic residues" evidence="2">
    <location>
        <begin position="90"/>
        <end position="111"/>
    </location>
</feature>
<sequence length="111" mass="12032">MGDNNRATLGSDAAANAPDAAAFDKGKGKATEDPSLEMSMDEDEESEENDDEDGGDNLEPISADNIISGGRRTRGKTIDFQEAAEKIQGDDDDEDDDEEFQPNDDDDNMRD</sequence>
<reference key="1">
    <citation type="submission" date="2005-09" db="EMBL/GenBank/DDBJ databases">
        <title>Annotation of the Aspergillus terreus NIH2624 genome.</title>
        <authorList>
            <person name="Birren B.W."/>
            <person name="Lander E.S."/>
            <person name="Galagan J.E."/>
            <person name="Nusbaum C."/>
            <person name="Devon K."/>
            <person name="Henn M."/>
            <person name="Ma L.-J."/>
            <person name="Jaffe D.B."/>
            <person name="Butler J."/>
            <person name="Alvarez P."/>
            <person name="Gnerre S."/>
            <person name="Grabherr M."/>
            <person name="Kleber M."/>
            <person name="Mauceli E.W."/>
            <person name="Brockman W."/>
            <person name="Rounsley S."/>
            <person name="Young S.K."/>
            <person name="LaButti K."/>
            <person name="Pushparaj V."/>
            <person name="DeCaprio D."/>
            <person name="Crawford M."/>
            <person name="Koehrsen M."/>
            <person name="Engels R."/>
            <person name="Montgomery P."/>
            <person name="Pearson M."/>
            <person name="Howarth C."/>
            <person name="Larson L."/>
            <person name="Luoma S."/>
            <person name="White J."/>
            <person name="Alvarado L."/>
            <person name="Kodira C.D."/>
            <person name="Zeng Q."/>
            <person name="Oleary S."/>
            <person name="Yandava C."/>
            <person name="Denning D.W."/>
            <person name="Nierman W.C."/>
            <person name="Milne T."/>
            <person name="Madden K."/>
        </authorList>
    </citation>
    <scope>NUCLEOTIDE SEQUENCE [LARGE SCALE GENOMIC DNA]</scope>
    <source>
        <strain>NIH 2624 / FGSC A1156</strain>
    </source>
</reference>
<proteinExistence type="inferred from homology"/>
<accession>Q0C807</accession>
<keyword id="KW-0143">Chaperone</keyword>
<keyword id="KW-0539">Nucleus</keyword>
<keyword id="KW-1185">Reference proteome</keyword>